<organism>
    <name type="scientific">Macrococcus caseolyticus (strain JCSC5402)</name>
    <name type="common">Macrococcoides caseolyticum</name>
    <dbReference type="NCBI Taxonomy" id="458233"/>
    <lineage>
        <taxon>Bacteria</taxon>
        <taxon>Bacillati</taxon>
        <taxon>Bacillota</taxon>
        <taxon>Bacilli</taxon>
        <taxon>Bacillales</taxon>
        <taxon>Staphylococcaceae</taxon>
        <taxon>Macrococcoides</taxon>
    </lineage>
</organism>
<proteinExistence type="inferred from homology"/>
<protein>
    <recommendedName>
        <fullName evidence="1">Recombination protein RecR</fullName>
    </recommendedName>
</protein>
<keyword id="KW-0227">DNA damage</keyword>
<keyword id="KW-0233">DNA recombination</keyword>
<keyword id="KW-0234">DNA repair</keyword>
<keyword id="KW-0479">Metal-binding</keyword>
<keyword id="KW-1185">Reference proteome</keyword>
<keyword id="KW-0862">Zinc</keyword>
<keyword id="KW-0863">Zinc-finger</keyword>
<feature type="chain" id="PRO_1000195397" description="Recombination protein RecR">
    <location>
        <begin position="1"/>
        <end position="198"/>
    </location>
</feature>
<feature type="domain" description="Toprim" evidence="1">
    <location>
        <begin position="80"/>
        <end position="175"/>
    </location>
</feature>
<feature type="zinc finger region" description="C4-type" evidence="1">
    <location>
        <begin position="57"/>
        <end position="72"/>
    </location>
</feature>
<reference key="1">
    <citation type="journal article" date="2009" name="J. Bacteriol.">
        <title>Complete genome sequence of Macrococcus caseolyticus strain JCSCS5402, reflecting the ancestral genome of the human-pathogenic staphylococci.</title>
        <authorList>
            <person name="Baba T."/>
            <person name="Kuwahara-Arai K."/>
            <person name="Uchiyama I."/>
            <person name="Takeuchi F."/>
            <person name="Ito T."/>
            <person name="Hiramatsu K."/>
        </authorList>
    </citation>
    <scope>NUCLEOTIDE SEQUENCE [LARGE SCALE GENOMIC DNA]</scope>
    <source>
        <strain>JCSC5402</strain>
    </source>
</reference>
<accession>B9E8X2</accession>
<dbReference type="EMBL" id="AP009484">
    <property type="protein sequence ID" value="BAH18640.1"/>
    <property type="molecule type" value="Genomic_DNA"/>
</dbReference>
<dbReference type="RefSeq" id="WP_015912432.1">
    <property type="nucleotide sequence ID" value="NC_011999.1"/>
</dbReference>
<dbReference type="SMR" id="B9E8X2"/>
<dbReference type="STRING" id="458233.MCCL_1933"/>
<dbReference type="KEGG" id="mcl:MCCL_1933"/>
<dbReference type="eggNOG" id="COG0353">
    <property type="taxonomic scope" value="Bacteria"/>
</dbReference>
<dbReference type="HOGENOM" id="CLU_060739_1_0_9"/>
<dbReference type="OrthoDB" id="9802672at2"/>
<dbReference type="Proteomes" id="UP000001383">
    <property type="component" value="Chromosome"/>
</dbReference>
<dbReference type="GO" id="GO:0003677">
    <property type="term" value="F:DNA binding"/>
    <property type="evidence" value="ECO:0007669"/>
    <property type="project" value="UniProtKB-UniRule"/>
</dbReference>
<dbReference type="GO" id="GO:0008270">
    <property type="term" value="F:zinc ion binding"/>
    <property type="evidence" value="ECO:0007669"/>
    <property type="project" value="UniProtKB-KW"/>
</dbReference>
<dbReference type="GO" id="GO:0006310">
    <property type="term" value="P:DNA recombination"/>
    <property type="evidence" value="ECO:0007669"/>
    <property type="project" value="UniProtKB-UniRule"/>
</dbReference>
<dbReference type="GO" id="GO:0006281">
    <property type="term" value="P:DNA repair"/>
    <property type="evidence" value="ECO:0007669"/>
    <property type="project" value="UniProtKB-UniRule"/>
</dbReference>
<dbReference type="CDD" id="cd01025">
    <property type="entry name" value="TOPRIM_recR"/>
    <property type="match status" value="1"/>
</dbReference>
<dbReference type="Gene3D" id="3.30.60.80">
    <property type="match status" value="1"/>
</dbReference>
<dbReference type="Gene3D" id="3.40.1360.10">
    <property type="match status" value="1"/>
</dbReference>
<dbReference type="Gene3D" id="6.10.250.240">
    <property type="match status" value="1"/>
</dbReference>
<dbReference type="Gene3D" id="1.10.8.420">
    <property type="entry name" value="RecR Domain 1"/>
    <property type="match status" value="1"/>
</dbReference>
<dbReference type="HAMAP" id="MF_00017">
    <property type="entry name" value="RecR"/>
    <property type="match status" value="1"/>
</dbReference>
<dbReference type="InterPro" id="IPR000093">
    <property type="entry name" value="DNA_Rcmb_RecR"/>
</dbReference>
<dbReference type="InterPro" id="IPR023627">
    <property type="entry name" value="Rcmb_RecR"/>
</dbReference>
<dbReference type="InterPro" id="IPR015967">
    <property type="entry name" value="Rcmb_RecR_Znf"/>
</dbReference>
<dbReference type="InterPro" id="IPR006171">
    <property type="entry name" value="TOPRIM_dom"/>
</dbReference>
<dbReference type="InterPro" id="IPR034137">
    <property type="entry name" value="TOPRIM_RecR"/>
</dbReference>
<dbReference type="NCBIfam" id="TIGR00615">
    <property type="entry name" value="recR"/>
    <property type="match status" value="1"/>
</dbReference>
<dbReference type="PANTHER" id="PTHR30446">
    <property type="entry name" value="RECOMBINATION PROTEIN RECR"/>
    <property type="match status" value="1"/>
</dbReference>
<dbReference type="PANTHER" id="PTHR30446:SF0">
    <property type="entry name" value="RECOMBINATION PROTEIN RECR"/>
    <property type="match status" value="1"/>
</dbReference>
<dbReference type="Pfam" id="PF21175">
    <property type="entry name" value="RecR_C"/>
    <property type="match status" value="1"/>
</dbReference>
<dbReference type="Pfam" id="PF21176">
    <property type="entry name" value="RecR_HhH"/>
    <property type="match status" value="1"/>
</dbReference>
<dbReference type="Pfam" id="PF02132">
    <property type="entry name" value="RecR_ZnF"/>
    <property type="match status" value="1"/>
</dbReference>
<dbReference type="Pfam" id="PF13662">
    <property type="entry name" value="Toprim_4"/>
    <property type="match status" value="1"/>
</dbReference>
<dbReference type="SMART" id="SM00493">
    <property type="entry name" value="TOPRIM"/>
    <property type="match status" value="1"/>
</dbReference>
<dbReference type="SUPFAM" id="SSF111304">
    <property type="entry name" value="Recombination protein RecR"/>
    <property type="match status" value="1"/>
</dbReference>
<dbReference type="PROSITE" id="PS01300">
    <property type="entry name" value="RECR"/>
    <property type="match status" value="1"/>
</dbReference>
<dbReference type="PROSITE" id="PS50880">
    <property type="entry name" value="TOPRIM"/>
    <property type="match status" value="1"/>
</dbReference>
<sequence length="198" mass="21910">MHYPAPISKLIDSFMKLPGIGPKTASRLAFHVLDMKEDDVVGFAKALVDVKRELTYCSVCGHITDTDPCYICEDKTRDQSMICVVEETKDVIAMEKMREYKGLYHVLHGAISPMEGVGPEDINVPSLLTRLRDEHIQELILATNPNIEGESTAMYIARLVKPIGIKVTRLAHGLPVGGDLEYADEVTLSKAITGRTEI</sequence>
<evidence type="ECO:0000255" key="1">
    <source>
        <dbReference type="HAMAP-Rule" id="MF_00017"/>
    </source>
</evidence>
<comment type="function">
    <text evidence="1">May play a role in DNA repair. It seems to be involved in an RecBC-independent recombinational process of DNA repair. It may act with RecF and RecO.</text>
</comment>
<comment type="similarity">
    <text evidence="1">Belongs to the RecR family.</text>
</comment>
<gene>
    <name evidence="1" type="primary">recR</name>
    <name type="ordered locus">MCCL_1933</name>
</gene>
<name>RECR_MACCJ</name>